<protein>
    <recommendedName>
        <fullName>GTP-binding nuclear protein Ran-1</fullName>
        <shortName>OsRan1</shortName>
    </recommendedName>
    <alternativeName>
        <fullName>Ras-related nuclear protein 1</fullName>
    </alternativeName>
</protein>
<dbReference type="EMBL" id="CM000126">
    <property type="protein sequence ID" value="EAY74933.1"/>
    <property type="status" value="ALT_SEQ"/>
    <property type="molecule type" value="Genomic_DNA"/>
</dbReference>
<dbReference type="EMBL" id="CT855777">
    <property type="status" value="NOT_ANNOTATED_CDS"/>
    <property type="molecule type" value="mRNA"/>
</dbReference>
<dbReference type="SMR" id="A2WSI7"/>
<dbReference type="STRING" id="39946.A2WSI7"/>
<dbReference type="EnsemblPlants" id="OsIR64_01g0023670.01">
    <property type="protein sequence ID" value="OsIR64_01g0023670.01"/>
    <property type="gene ID" value="OsIR64_01g0023670"/>
</dbReference>
<dbReference type="EnsemblPlants" id="OsLaMu_01g0024040.01">
    <property type="protein sequence ID" value="OsLaMu_01g0024040.01"/>
    <property type="gene ID" value="OsLaMu_01g0024040"/>
</dbReference>
<dbReference type="EnsemblPlants" id="OsLiXu_01g0024170.01">
    <property type="protein sequence ID" value="OsLiXu_01g0024170.01"/>
    <property type="gene ID" value="OsLiXu_01g0024170"/>
</dbReference>
<dbReference type="EnsemblPlants" id="OsPr106_01g0023990.01">
    <property type="protein sequence ID" value="OsPr106_01g0023990.01"/>
    <property type="gene ID" value="OsPr106_01g0023990"/>
</dbReference>
<dbReference type="Gramene" id="OsIR64_01g0023670.01">
    <property type="protein sequence ID" value="OsIR64_01g0023670.01"/>
    <property type="gene ID" value="OsIR64_01g0023670"/>
</dbReference>
<dbReference type="Gramene" id="OsLaMu_01g0024040.01">
    <property type="protein sequence ID" value="OsLaMu_01g0024040.01"/>
    <property type="gene ID" value="OsLaMu_01g0024040"/>
</dbReference>
<dbReference type="Gramene" id="OsLiXu_01g0024170.01">
    <property type="protein sequence ID" value="OsLiXu_01g0024170.01"/>
    <property type="gene ID" value="OsLiXu_01g0024170"/>
</dbReference>
<dbReference type="Gramene" id="OsPr106_01g0023990.01">
    <property type="protein sequence ID" value="OsPr106_01g0023990.01"/>
    <property type="gene ID" value="OsPr106_01g0023990"/>
</dbReference>
<dbReference type="HOGENOM" id="CLU_620221_0_0_1"/>
<dbReference type="Proteomes" id="UP000007015">
    <property type="component" value="Chromosome 1"/>
</dbReference>
<dbReference type="GO" id="GO:0005737">
    <property type="term" value="C:cytoplasm"/>
    <property type="evidence" value="ECO:0007669"/>
    <property type="project" value="TreeGrafter"/>
</dbReference>
<dbReference type="GO" id="GO:0005634">
    <property type="term" value="C:nucleus"/>
    <property type="evidence" value="ECO:0007669"/>
    <property type="project" value="UniProtKB-SubCell"/>
</dbReference>
<dbReference type="GO" id="GO:0005525">
    <property type="term" value="F:GTP binding"/>
    <property type="evidence" value="ECO:0007669"/>
    <property type="project" value="UniProtKB-KW"/>
</dbReference>
<dbReference type="GO" id="GO:0003924">
    <property type="term" value="F:GTPase activity"/>
    <property type="evidence" value="ECO:0007669"/>
    <property type="project" value="InterPro"/>
</dbReference>
<dbReference type="GO" id="GO:0006606">
    <property type="term" value="P:protein import into nucleus"/>
    <property type="evidence" value="ECO:0007669"/>
    <property type="project" value="TreeGrafter"/>
</dbReference>
<dbReference type="GO" id="GO:0000054">
    <property type="term" value="P:ribosomal subunit export from nucleus"/>
    <property type="evidence" value="ECO:0007669"/>
    <property type="project" value="TreeGrafter"/>
</dbReference>
<dbReference type="CDD" id="cd00877">
    <property type="entry name" value="Ran"/>
    <property type="match status" value="1"/>
</dbReference>
<dbReference type="FunFam" id="3.40.50.300:FF:000369">
    <property type="entry name" value="GTP-binding nuclear protein"/>
    <property type="match status" value="1"/>
</dbReference>
<dbReference type="Gene3D" id="3.40.50.300">
    <property type="entry name" value="P-loop containing nucleotide triphosphate hydrolases"/>
    <property type="match status" value="1"/>
</dbReference>
<dbReference type="InterPro" id="IPR027417">
    <property type="entry name" value="P-loop_NTPase"/>
</dbReference>
<dbReference type="InterPro" id="IPR002041">
    <property type="entry name" value="Ran_GTPase"/>
</dbReference>
<dbReference type="InterPro" id="IPR005225">
    <property type="entry name" value="Small_GTP-bd"/>
</dbReference>
<dbReference type="InterPro" id="IPR001806">
    <property type="entry name" value="Small_GTPase"/>
</dbReference>
<dbReference type="NCBIfam" id="TIGR00231">
    <property type="entry name" value="small_GTP"/>
    <property type="match status" value="1"/>
</dbReference>
<dbReference type="PANTHER" id="PTHR24071:SF33">
    <property type="entry name" value="GTP-BINDING NUCLEAR PROTEIN RAN-1"/>
    <property type="match status" value="1"/>
</dbReference>
<dbReference type="PANTHER" id="PTHR24071">
    <property type="entry name" value="RAN GTPASE"/>
    <property type="match status" value="1"/>
</dbReference>
<dbReference type="Pfam" id="PF00071">
    <property type="entry name" value="Ras"/>
    <property type="match status" value="1"/>
</dbReference>
<dbReference type="PRINTS" id="PR00627">
    <property type="entry name" value="GTPRANTC4"/>
</dbReference>
<dbReference type="SMART" id="SM00175">
    <property type="entry name" value="RAB"/>
    <property type="match status" value="1"/>
</dbReference>
<dbReference type="SMART" id="SM00176">
    <property type="entry name" value="RAN"/>
    <property type="match status" value="1"/>
</dbReference>
<dbReference type="SMART" id="SM00173">
    <property type="entry name" value="RAS"/>
    <property type="match status" value="1"/>
</dbReference>
<dbReference type="SMART" id="SM00174">
    <property type="entry name" value="RHO"/>
    <property type="match status" value="1"/>
</dbReference>
<dbReference type="SUPFAM" id="SSF52540">
    <property type="entry name" value="P-loop containing nucleoside triphosphate hydrolases"/>
    <property type="match status" value="1"/>
</dbReference>
<dbReference type="PROSITE" id="PS51418">
    <property type="entry name" value="RAN"/>
    <property type="match status" value="1"/>
</dbReference>
<keyword id="KW-0342">GTP-binding</keyword>
<keyword id="KW-0547">Nucleotide-binding</keyword>
<keyword id="KW-0539">Nucleus</keyword>
<keyword id="KW-0653">Protein transport</keyword>
<keyword id="KW-1185">Reference proteome</keyword>
<keyword id="KW-0813">Transport</keyword>
<name>RAN1_ORYSI</name>
<comment type="function">
    <text evidence="1">GTP-binding protein involved in nucleocytoplasmic transport. Required for the import of protein into the nucleus and also for RNA export. Involved in chromatin condensation and control of cell cycle (By similarity).</text>
</comment>
<comment type="subunit">
    <text evidence="2">Found in a nuclear export complex with RanGTP, exportin and pre-miRNA (By similarity).</text>
</comment>
<comment type="subcellular location">
    <subcellularLocation>
        <location evidence="1">Nucleus</location>
    </subcellularLocation>
</comment>
<comment type="similarity">
    <text evidence="3 4">Belongs to the small GTPase superfamily. Ran family.</text>
</comment>
<comment type="sequence caution" evidence="4">
    <conflict type="erroneous gene model prediction">
        <sequence resource="EMBL-CDS" id="EAY74933"/>
    </conflict>
</comment>
<proteinExistence type="evidence at transcript level"/>
<gene>
    <name type="primary">RAN1</name>
    <name type="ORF">OsI_002780</name>
</gene>
<reference key="1">
    <citation type="journal article" date="2005" name="PLoS Biol.">
        <title>The genomes of Oryza sativa: a history of duplications.</title>
        <authorList>
            <person name="Yu J."/>
            <person name="Wang J."/>
            <person name="Lin W."/>
            <person name="Li S."/>
            <person name="Li H."/>
            <person name="Zhou J."/>
            <person name="Ni P."/>
            <person name="Dong W."/>
            <person name="Hu S."/>
            <person name="Zeng C."/>
            <person name="Zhang J."/>
            <person name="Zhang Y."/>
            <person name="Li R."/>
            <person name="Xu Z."/>
            <person name="Li S."/>
            <person name="Li X."/>
            <person name="Zheng H."/>
            <person name="Cong L."/>
            <person name="Lin L."/>
            <person name="Yin J."/>
            <person name="Geng J."/>
            <person name="Li G."/>
            <person name="Shi J."/>
            <person name="Liu J."/>
            <person name="Lv H."/>
            <person name="Li J."/>
            <person name="Wang J."/>
            <person name="Deng Y."/>
            <person name="Ran L."/>
            <person name="Shi X."/>
            <person name="Wang X."/>
            <person name="Wu Q."/>
            <person name="Li C."/>
            <person name="Ren X."/>
            <person name="Wang J."/>
            <person name="Wang X."/>
            <person name="Li D."/>
            <person name="Liu D."/>
            <person name="Zhang X."/>
            <person name="Ji Z."/>
            <person name="Zhao W."/>
            <person name="Sun Y."/>
            <person name="Zhang Z."/>
            <person name="Bao J."/>
            <person name="Han Y."/>
            <person name="Dong L."/>
            <person name="Ji J."/>
            <person name="Chen P."/>
            <person name="Wu S."/>
            <person name="Liu J."/>
            <person name="Xiao Y."/>
            <person name="Bu D."/>
            <person name="Tan J."/>
            <person name="Yang L."/>
            <person name="Ye C."/>
            <person name="Zhang J."/>
            <person name="Xu J."/>
            <person name="Zhou Y."/>
            <person name="Yu Y."/>
            <person name="Zhang B."/>
            <person name="Zhuang S."/>
            <person name="Wei H."/>
            <person name="Liu B."/>
            <person name="Lei M."/>
            <person name="Yu H."/>
            <person name="Li Y."/>
            <person name="Xu H."/>
            <person name="Wei S."/>
            <person name="He X."/>
            <person name="Fang L."/>
            <person name="Zhang Z."/>
            <person name="Zhang Y."/>
            <person name="Huang X."/>
            <person name="Su Z."/>
            <person name="Tong W."/>
            <person name="Li J."/>
            <person name="Tong Z."/>
            <person name="Li S."/>
            <person name="Ye J."/>
            <person name="Wang L."/>
            <person name="Fang L."/>
            <person name="Lei T."/>
            <person name="Chen C.-S."/>
            <person name="Chen H.-C."/>
            <person name="Xu Z."/>
            <person name="Li H."/>
            <person name="Huang H."/>
            <person name="Zhang F."/>
            <person name="Xu H."/>
            <person name="Li N."/>
            <person name="Zhao C."/>
            <person name="Li S."/>
            <person name="Dong L."/>
            <person name="Huang Y."/>
            <person name="Li L."/>
            <person name="Xi Y."/>
            <person name="Qi Q."/>
            <person name="Li W."/>
            <person name="Zhang B."/>
            <person name="Hu W."/>
            <person name="Zhang Y."/>
            <person name="Tian X."/>
            <person name="Jiao Y."/>
            <person name="Liang X."/>
            <person name="Jin J."/>
            <person name="Gao L."/>
            <person name="Zheng W."/>
            <person name="Hao B."/>
            <person name="Liu S.-M."/>
            <person name="Wang W."/>
            <person name="Yuan L."/>
            <person name="Cao M."/>
            <person name="McDermott J."/>
            <person name="Samudrala R."/>
            <person name="Wang J."/>
            <person name="Wong G.K.-S."/>
            <person name="Yang H."/>
        </authorList>
    </citation>
    <scope>NUCLEOTIDE SEQUENCE [LARGE SCALE GENOMIC DNA]</scope>
    <source>
        <strain>cv. 93-11</strain>
    </source>
</reference>
<reference key="2">
    <citation type="journal article" date="2007" name="Plant Mol. Biol.">
        <title>A collection of 10,096 indica rice full-length cDNAs reveals highly expressed sequence divergence between Oryza sativa indica and japonica subspecies.</title>
        <authorList>
            <person name="Liu X."/>
            <person name="Lu T."/>
            <person name="Yu S."/>
            <person name="Li Y."/>
            <person name="Huang Y."/>
            <person name="Huang T."/>
            <person name="Zhang L."/>
            <person name="Zhu J."/>
            <person name="Zhao Q."/>
            <person name="Fan D."/>
            <person name="Mu J."/>
            <person name="Shangguan Y."/>
            <person name="Feng Q."/>
            <person name="Guan J."/>
            <person name="Ying K."/>
            <person name="Zhang Y."/>
            <person name="Lin Z."/>
            <person name="Sun Z."/>
            <person name="Qian Q."/>
            <person name="Lu Y."/>
            <person name="Han B."/>
        </authorList>
    </citation>
    <scope>NUCLEOTIDE SEQUENCE [LARGE SCALE MRNA]</scope>
    <source>
        <strain>cv. Guang-Lu-Ai No.4</strain>
    </source>
</reference>
<evidence type="ECO:0000250" key="1"/>
<evidence type="ECO:0000250" key="2">
    <source>
        <dbReference type="UniProtKB" id="P62825"/>
    </source>
</evidence>
<evidence type="ECO:0000255" key="3">
    <source>
        <dbReference type="PROSITE-ProRule" id="PRU00752"/>
    </source>
</evidence>
<evidence type="ECO:0000305" key="4"/>
<feature type="chain" id="PRO_0000347209" description="GTP-binding nuclear protein Ran-1">
    <location>
        <begin position="1"/>
        <end position="221"/>
    </location>
</feature>
<feature type="domain" description="Small GTPase Ran-type" evidence="3">
    <location>
        <begin position="10"/>
        <end position="174"/>
    </location>
</feature>
<feature type="region of interest" description="Switch-I" evidence="3">
    <location>
        <begin position="40"/>
        <end position="48"/>
    </location>
</feature>
<feature type="region of interest" description="Switch-II" evidence="3">
    <location>
        <begin position="71"/>
        <end position="87"/>
    </location>
</feature>
<feature type="binding site" evidence="2">
    <location>
        <begin position="21"/>
        <end position="28"/>
    </location>
    <ligand>
        <name>GTP</name>
        <dbReference type="ChEBI" id="CHEBI:37565"/>
    </ligand>
</feature>
<feature type="binding site" evidence="2">
    <location>
        <position position="71"/>
    </location>
    <ligand>
        <name>GTP</name>
        <dbReference type="ChEBI" id="CHEBI:37565"/>
    </ligand>
</feature>
<feature type="binding site" evidence="2">
    <location>
        <begin position="125"/>
        <end position="128"/>
    </location>
    <ligand>
        <name>GTP</name>
        <dbReference type="ChEBI" id="CHEBI:37565"/>
    </ligand>
</feature>
<feature type="binding site" evidence="2">
    <location>
        <begin position="153"/>
        <end position="155"/>
    </location>
    <ligand>
        <name>GTP</name>
        <dbReference type="ChEBI" id="CHEBI:37565"/>
    </ligand>
</feature>
<accession>A2WSI7</accession>
<organism>
    <name type="scientific">Oryza sativa subsp. indica</name>
    <name type="common">Rice</name>
    <dbReference type="NCBI Taxonomy" id="39946"/>
    <lineage>
        <taxon>Eukaryota</taxon>
        <taxon>Viridiplantae</taxon>
        <taxon>Streptophyta</taxon>
        <taxon>Embryophyta</taxon>
        <taxon>Tracheophyta</taxon>
        <taxon>Spermatophyta</taxon>
        <taxon>Magnoliopsida</taxon>
        <taxon>Liliopsida</taxon>
        <taxon>Poales</taxon>
        <taxon>Poaceae</taxon>
        <taxon>BOP clade</taxon>
        <taxon>Oryzoideae</taxon>
        <taxon>Oryzeae</taxon>
        <taxon>Oryzinae</taxon>
        <taxon>Oryza</taxon>
        <taxon>Oryza sativa</taxon>
    </lineage>
</organism>
<sequence>MALPNQQTVDYPSFKLVIVGDGGTGKTTFVKRHLTGEFEKKYEPTIGVEVHPLDFFTNCGKIRFYCWDTAGQEKFGGLRDGYYIHGQCAIIMFDVTSRLTYKNVPTWHRDLCRVCENIPIVLCGNKVDVKNRQVKAKQVTFHRKKNLQYYEVSAKSNYNFEKPFLYLARKLAGDGNLHFVETPALAPPDVTIDLAAQQQHEAELAAAAAQPLPDDDDDLIE</sequence>